<feature type="chain" id="PRO_0000280488" description="Divalent-cation tolerance protein CutA">
    <location>
        <begin position="1"/>
        <end position="112"/>
    </location>
</feature>
<feature type="binding site" evidence="1">
    <location>
        <position position="16"/>
    </location>
    <ligand>
        <name>Cu cation</name>
        <dbReference type="ChEBI" id="CHEBI:23378"/>
    </ligand>
</feature>
<feature type="binding site" evidence="1">
    <location>
        <position position="83"/>
    </location>
    <ligand>
        <name>Cu cation</name>
        <dbReference type="ChEBI" id="CHEBI:23378"/>
    </ligand>
</feature>
<feature type="binding site" evidence="1">
    <location>
        <position position="84"/>
    </location>
    <ligand>
        <name>Cu cation</name>
        <dbReference type="ChEBI" id="CHEBI:23378"/>
    </ligand>
</feature>
<reference key="1">
    <citation type="journal article" date="2005" name="Nucleic Acids Res.">
        <title>Genome dynamics and diversity of Shigella species, the etiologic agents of bacillary dysentery.</title>
        <authorList>
            <person name="Yang F."/>
            <person name="Yang J."/>
            <person name="Zhang X."/>
            <person name="Chen L."/>
            <person name="Jiang Y."/>
            <person name="Yan Y."/>
            <person name="Tang X."/>
            <person name="Wang J."/>
            <person name="Xiong Z."/>
            <person name="Dong J."/>
            <person name="Xue Y."/>
            <person name="Zhu Y."/>
            <person name="Xu X."/>
            <person name="Sun L."/>
            <person name="Chen S."/>
            <person name="Nie H."/>
            <person name="Peng J."/>
            <person name="Xu J."/>
            <person name="Wang Y."/>
            <person name="Yuan Z."/>
            <person name="Wen Y."/>
            <person name="Yao Z."/>
            <person name="Shen Y."/>
            <person name="Qiang B."/>
            <person name="Hou Y."/>
            <person name="Yu J."/>
            <person name="Jin Q."/>
        </authorList>
    </citation>
    <scope>NUCLEOTIDE SEQUENCE [LARGE SCALE GENOMIC DNA]</scope>
    <source>
        <strain>Ss046</strain>
    </source>
</reference>
<dbReference type="EMBL" id="CP000038">
    <property type="protein sequence ID" value="AAZ90809.1"/>
    <property type="molecule type" value="Genomic_DNA"/>
</dbReference>
<dbReference type="RefSeq" id="WP_000883400.1">
    <property type="nucleotide sequence ID" value="NC_007384.1"/>
</dbReference>
<dbReference type="SMR" id="Q3YUK3"/>
<dbReference type="GeneID" id="93777687"/>
<dbReference type="KEGG" id="ssn:SSON_4320"/>
<dbReference type="HOGENOM" id="CLU_098807_3_0_6"/>
<dbReference type="Proteomes" id="UP000002529">
    <property type="component" value="Chromosome"/>
</dbReference>
<dbReference type="GO" id="GO:0005737">
    <property type="term" value="C:cytoplasm"/>
    <property type="evidence" value="ECO:0007669"/>
    <property type="project" value="UniProtKB-SubCell"/>
</dbReference>
<dbReference type="GO" id="GO:0005507">
    <property type="term" value="F:copper ion binding"/>
    <property type="evidence" value="ECO:0007669"/>
    <property type="project" value="UniProtKB-UniRule"/>
</dbReference>
<dbReference type="GO" id="GO:0010038">
    <property type="term" value="P:response to metal ion"/>
    <property type="evidence" value="ECO:0007669"/>
    <property type="project" value="InterPro"/>
</dbReference>
<dbReference type="FunFam" id="3.30.70.120:FF:000004">
    <property type="entry name" value="Divalent-cation tolerance protein CutA"/>
    <property type="match status" value="1"/>
</dbReference>
<dbReference type="Gene3D" id="3.30.70.120">
    <property type="match status" value="1"/>
</dbReference>
<dbReference type="HAMAP" id="MF_01160">
    <property type="entry name" value="CutA"/>
    <property type="match status" value="1"/>
</dbReference>
<dbReference type="InterPro" id="IPR023700">
    <property type="entry name" value="CutA_Enterobact"/>
</dbReference>
<dbReference type="InterPro" id="IPR004323">
    <property type="entry name" value="Ion_tolerance_CutA"/>
</dbReference>
<dbReference type="InterPro" id="IPR011322">
    <property type="entry name" value="N-reg_PII-like_a/b"/>
</dbReference>
<dbReference type="InterPro" id="IPR015867">
    <property type="entry name" value="N-reg_PII/ATP_PRibTrfase_C"/>
</dbReference>
<dbReference type="NCBIfam" id="NF007930">
    <property type="entry name" value="PRK10645.1"/>
    <property type="match status" value="1"/>
</dbReference>
<dbReference type="PANTHER" id="PTHR23419">
    <property type="entry name" value="DIVALENT CATION TOLERANCE CUTA-RELATED"/>
    <property type="match status" value="1"/>
</dbReference>
<dbReference type="PANTHER" id="PTHR23419:SF8">
    <property type="entry name" value="FI09726P"/>
    <property type="match status" value="1"/>
</dbReference>
<dbReference type="Pfam" id="PF03091">
    <property type="entry name" value="CutA1"/>
    <property type="match status" value="1"/>
</dbReference>
<dbReference type="SUPFAM" id="SSF54913">
    <property type="entry name" value="GlnB-like"/>
    <property type="match status" value="1"/>
</dbReference>
<protein>
    <recommendedName>
        <fullName evidence="1">Divalent-cation tolerance protein CutA</fullName>
    </recommendedName>
</protein>
<sequence length="112" mass="12331">MLDEKSSNTASVVVLCTAPDEATAQDLAAKVLAEKLAACATLIPGATSLYYWEGKLEQEYEVQMILKTTVSHQQALLECLKSHHPYQTPELLVLPVTHGDTDYLSWLNASLR</sequence>
<gene>
    <name evidence="1" type="primary">cutA</name>
    <name type="ordered locus">SSON_4320</name>
</gene>
<evidence type="ECO:0000255" key="1">
    <source>
        <dbReference type="HAMAP-Rule" id="MF_01160"/>
    </source>
</evidence>
<comment type="function">
    <text evidence="1">Involved in resistance toward heavy metals.</text>
</comment>
<comment type="cofactor">
    <cofactor evidence="1">
        <name>Cu cation</name>
        <dbReference type="ChEBI" id="CHEBI:23378"/>
    </cofactor>
    <text evidence="1">Binds 1 copper ion per subunit.</text>
</comment>
<comment type="subunit">
    <text evidence="1">Homotrimer.</text>
</comment>
<comment type="subcellular location">
    <subcellularLocation>
        <location evidence="1">Cytoplasm</location>
    </subcellularLocation>
</comment>
<comment type="similarity">
    <text evidence="1">Belongs to the CutA family.</text>
</comment>
<name>CUTA_SHISS</name>
<proteinExistence type="inferred from homology"/>
<keyword id="KW-0186">Copper</keyword>
<keyword id="KW-0963">Cytoplasm</keyword>
<keyword id="KW-0479">Metal-binding</keyword>
<keyword id="KW-1185">Reference proteome</keyword>
<organism>
    <name type="scientific">Shigella sonnei (strain Ss046)</name>
    <dbReference type="NCBI Taxonomy" id="300269"/>
    <lineage>
        <taxon>Bacteria</taxon>
        <taxon>Pseudomonadati</taxon>
        <taxon>Pseudomonadota</taxon>
        <taxon>Gammaproteobacteria</taxon>
        <taxon>Enterobacterales</taxon>
        <taxon>Enterobacteriaceae</taxon>
        <taxon>Shigella</taxon>
    </lineage>
</organism>
<accession>Q3YUK3</accession>